<organism>
    <name type="scientific">Escherichia coli O1:K1 / APEC</name>
    <dbReference type="NCBI Taxonomy" id="405955"/>
    <lineage>
        <taxon>Bacteria</taxon>
        <taxon>Pseudomonadati</taxon>
        <taxon>Pseudomonadota</taxon>
        <taxon>Gammaproteobacteria</taxon>
        <taxon>Enterobacterales</taxon>
        <taxon>Enterobacteriaceae</taxon>
        <taxon>Escherichia</taxon>
    </lineage>
</organism>
<dbReference type="EMBL" id="CP000468">
    <property type="protein sequence ID" value="ABJ01471.1"/>
    <property type="molecule type" value="Genomic_DNA"/>
</dbReference>
<dbReference type="RefSeq" id="WP_000667561.1">
    <property type="nucleotide sequence ID" value="NZ_CADILS010000029.1"/>
</dbReference>
<dbReference type="SMR" id="A1ACT1"/>
<dbReference type="KEGG" id="ecv:APECO1_1166"/>
<dbReference type="HOGENOM" id="CLU_002755_1_2_6"/>
<dbReference type="Proteomes" id="UP000008216">
    <property type="component" value="Chromosome"/>
</dbReference>
<dbReference type="GO" id="GO:0005886">
    <property type="term" value="C:plasma membrane"/>
    <property type="evidence" value="ECO:0007669"/>
    <property type="project" value="UniProtKB-SubCell"/>
</dbReference>
<dbReference type="GO" id="GO:0042910">
    <property type="term" value="F:xenobiotic transmembrane transporter activity"/>
    <property type="evidence" value="ECO:0007669"/>
    <property type="project" value="TreeGrafter"/>
</dbReference>
<dbReference type="FunFam" id="1.20.1640.10:FF:000001">
    <property type="entry name" value="Efflux pump membrane transporter"/>
    <property type="match status" value="1"/>
</dbReference>
<dbReference type="FunFam" id="3.30.70.1430:FF:000001">
    <property type="entry name" value="Efflux pump membrane transporter"/>
    <property type="match status" value="1"/>
</dbReference>
<dbReference type="FunFam" id="3.30.2090.10:FF:000004">
    <property type="entry name" value="Multidrug resistance protein MdtC"/>
    <property type="match status" value="1"/>
</dbReference>
<dbReference type="FunFam" id="3.30.2090.10:FF:000005">
    <property type="entry name" value="Multidrug resistance protein MdtC"/>
    <property type="match status" value="1"/>
</dbReference>
<dbReference type="FunFam" id="3.30.70.1430:FF:000004">
    <property type="entry name" value="Multidrug resistance protein MdtC"/>
    <property type="match status" value="1"/>
</dbReference>
<dbReference type="Gene3D" id="3.30.70.1430">
    <property type="entry name" value="Multidrug efflux transporter AcrB pore domain"/>
    <property type="match status" value="2"/>
</dbReference>
<dbReference type="Gene3D" id="3.30.70.1440">
    <property type="entry name" value="Multidrug efflux transporter AcrB pore domain"/>
    <property type="match status" value="1"/>
</dbReference>
<dbReference type="Gene3D" id="3.30.70.1320">
    <property type="entry name" value="Multidrug efflux transporter AcrB pore domain like"/>
    <property type="match status" value="1"/>
</dbReference>
<dbReference type="Gene3D" id="3.30.2090.10">
    <property type="entry name" value="Multidrug efflux transporter AcrB TolC docking domain, DN and DC subdomains"/>
    <property type="match status" value="2"/>
</dbReference>
<dbReference type="Gene3D" id="1.20.1640.10">
    <property type="entry name" value="Multidrug efflux transporter AcrB transmembrane domain"/>
    <property type="match status" value="2"/>
</dbReference>
<dbReference type="HAMAP" id="MF_01424">
    <property type="entry name" value="MdtC"/>
    <property type="match status" value="1"/>
</dbReference>
<dbReference type="InterPro" id="IPR027463">
    <property type="entry name" value="AcrB_DN_DC_subdom"/>
</dbReference>
<dbReference type="InterPro" id="IPR001036">
    <property type="entry name" value="Acrflvin-R"/>
</dbReference>
<dbReference type="InterPro" id="IPR023931">
    <property type="entry name" value="Multidrug-R_MdtC"/>
</dbReference>
<dbReference type="NCBIfam" id="NF007905">
    <property type="entry name" value="PRK10614.1"/>
    <property type="match status" value="1"/>
</dbReference>
<dbReference type="NCBIfam" id="NF033617">
    <property type="entry name" value="RND_permease_2"/>
    <property type="match status" value="1"/>
</dbReference>
<dbReference type="PANTHER" id="PTHR32063">
    <property type="match status" value="1"/>
</dbReference>
<dbReference type="PANTHER" id="PTHR32063:SF34">
    <property type="entry name" value="MULTIDRUG RESISTANCE PROTEIN MDTC"/>
    <property type="match status" value="1"/>
</dbReference>
<dbReference type="Pfam" id="PF00873">
    <property type="entry name" value="ACR_tran"/>
    <property type="match status" value="1"/>
</dbReference>
<dbReference type="PRINTS" id="PR00702">
    <property type="entry name" value="ACRIFLAVINRP"/>
</dbReference>
<dbReference type="SUPFAM" id="SSF82693">
    <property type="entry name" value="Multidrug efflux transporter AcrB pore domain, PN1, PN2, PC1 and PC2 subdomains"/>
    <property type="match status" value="4"/>
</dbReference>
<dbReference type="SUPFAM" id="SSF82714">
    <property type="entry name" value="Multidrug efflux transporter AcrB TolC docking domain, DN and DC subdomains"/>
    <property type="match status" value="2"/>
</dbReference>
<dbReference type="SUPFAM" id="SSF82866">
    <property type="entry name" value="Multidrug efflux transporter AcrB transmembrane domain"/>
    <property type="match status" value="2"/>
</dbReference>
<proteinExistence type="evidence at transcript level"/>
<keyword id="KW-0997">Cell inner membrane</keyword>
<keyword id="KW-1003">Cell membrane</keyword>
<keyword id="KW-0472">Membrane</keyword>
<keyword id="KW-1185">Reference proteome</keyword>
<keyword id="KW-0812">Transmembrane</keyword>
<keyword id="KW-1133">Transmembrane helix</keyword>
<keyword id="KW-0813">Transport</keyword>
<accession>A1ACT1</accession>
<reference key="1">
    <citation type="journal article" date="2007" name="J. Bacteriol.">
        <title>The genome sequence of avian pathogenic Escherichia coli strain O1:K1:H7 shares strong similarities with human extraintestinal pathogenic E. coli genomes.</title>
        <authorList>
            <person name="Johnson T.J."/>
            <person name="Kariyawasam S."/>
            <person name="Wannemuehler Y."/>
            <person name="Mangiamele P."/>
            <person name="Johnson S.J."/>
            <person name="Doetkott C."/>
            <person name="Skyberg J.A."/>
            <person name="Lynne A.M."/>
            <person name="Johnson J.R."/>
            <person name="Nolan L.K."/>
        </authorList>
    </citation>
    <scope>NUCLEOTIDE SEQUENCE [LARGE SCALE GENOMIC DNA]</scope>
</reference>
<gene>
    <name evidence="1" type="primary">mdtC</name>
    <name type="ordered locus">Ecok1_19770</name>
    <name type="ORF">APECO1_1166</name>
</gene>
<sequence>MKFFALFIYRPVATILLSVAITLCGILGFRMLPVAPLPQVDFPVIMVSASLPGASPETMASSVATPLERSLGRIAGVSEMTSSSSLGSTRIILQFDFDRDINGAARDVQAAINAAQSLLPSGMPSRPTYRKANPSDAPIMILTLTSDTYSQGELYDFASTQLAPTISQIDGVGDVDVGGSSLPAVRVGLNPQALFNQGVSLDDVRTAISNANVRKPQGALEDGTHRWQIQTNDELKTAAEYQPLIIHYNNGGAVRLGDVATVTDSVQDVRNAGMTNAKPAILLMIRKLPEANIIQTVDSIRARLPELQSTIPAAIDLQIAQDRSPTIRASLEEVEQTLIISVALVILVVFLFLRSGRATIIPAVAVPVSLIGTFAAMYLCGFSLNNLSLMALTIATGFVVDDAIVVLENIARHLEAGMKPLQAALQGTREVGFTVLSMSLSLVAVFLPLLLMGGLPGRLLREFAVTLSVAIGISLLVSLTLTPMMCGWMLKASKPREQKRLRGFGRMLVALQQGYGKSLKWVLNHTRLVGVVLLGTIALNIWLYISIPKTFFPEQDTGVLMGGIQADQSISFQAMRGKLQDFMKIIRDDPAVDNVTGFTGGSRVNSGMMFITLKPRGERSETAQQIIDRLRKKLAKEPGANLFLMAVQDIRVGGRQANASYQYTLLSDDLAALREWEPKIRKKLATLPELADVNSDQEDNGAEMNLIYDRDTMARLGIDVQAANSLLNNAFGQRQISTIYQPMNQYKVVMEVDPRYTQDISALEKMFVINNEGKAIPLSYFAKWQPANAPLSVNHQGLSAASTISFNLPTGKSLSDASAAIDRAMTQLGVPSTVRGSFAGTAQVFQETMNSQVILIIAAIATVYIVLGILYESYVHPLTILSTLPSAGVGALLALQLFNAPFSLIALIGIMLLIGIVKKNAIMMVYFALEAQRHGNLTPQEAIFQACLLRFRPIMMTTLAALFGALPLVLSGGDGSELRQPLGITIVGGLVMSQLLTLYTTPVVYLFFDRLRLRFSRKPKQAVTE</sequence>
<name>MDTC_ECOK1</name>
<feature type="chain" id="PRO_1000024310" description="Multidrug resistance protein MdtC">
    <location>
        <begin position="1"/>
        <end position="1025"/>
    </location>
</feature>
<feature type="transmembrane region" description="Helical" evidence="1">
    <location>
        <begin position="3"/>
        <end position="23"/>
    </location>
</feature>
<feature type="transmembrane region" description="Helical" evidence="1">
    <location>
        <begin position="333"/>
        <end position="353"/>
    </location>
</feature>
<feature type="transmembrane region" description="Helical" evidence="1">
    <location>
        <begin position="360"/>
        <end position="380"/>
    </location>
</feature>
<feature type="transmembrane region" description="Helical" evidence="1">
    <location>
        <begin position="387"/>
        <end position="407"/>
    </location>
</feature>
<feature type="transmembrane region" description="Helical" evidence="1">
    <location>
        <begin position="431"/>
        <end position="451"/>
    </location>
</feature>
<feature type="transmembrane region" description="Helical" evidence="1">
    <location>
        <begin position="463"/>
        <end position="483"/>
    </location>
</feature>
<feature type="transmembrane region" description="Helical" evidence="1">
    <location>
        <begin position="528"/>
        <end position="548"/>
    </location>
</feature>
<feature type="transmembrane region" description="Helical" evidence="1">
    <location>
        <begin position="853"/>
        <end position="873"/>
    </location>
</feature>
<feature type="transmembrane region" description="Helical" evidence="1">
    <location>
        <begin position="875"/>
        <end position="895"/>
    </location>
</feature>
<feature type="transmembrane region" description="Helical" evidence="1">
    <location>
        <begin position="897"/>
        <end position="917"/>
    </location>
</feature>
<feature type="transmembrane region" description="Helical" evidence="1">
    <location>
        <begin position="953"/>
        <end position="973"/>
    </location>
</feature>
<feature type="transmembrane region" description="Helical" evidence="1">
    <location>
        <begin position="984"/>
        <end position="1004"/>
    </location>
</feature>
<comment type="function">
    <text evidence="1">The MdtABC tripartite complex confers resistance against novobiocin and deoxycholate.</text>
</comment>
<comment type="subunit">
    <text evidence="1">Part of a tripartite efflux system composed of MdtA, MdtB and MdtC. MdtC forms a heteromultimer with MdtB.</text>
</comment>
<comment type="subcellular location">
    <subcellularLocation>
        <location evidence="1">Cell inner membrane</location>
        <topology evidence="1">Multi-pass membrane protein</topology>
    </subcellularLocation>
</comment>
<comment type="induction">
    <text>The mdtABC operon is transcriptionally activated by BaeR.</text>
</comment>
<comment type="similarity">
    <text evidence="1">Belongs to the resistance-nodulation-cell division (RND) (TC 2.A.6) family. MdtC subfamily.</text>
</comment>
<evidence type="ECO:0000255" key="1">
    <source>
        <dbReference type="HAMAP-Rule" id="MF_01424"/>
    </source>
</evidence>
<protein>
    <recommendedName>
        <fullName evidence="1">Multidrug resistance protein MdtC</fullName>
    </recommendedName>
    <alternativeName>
        <fullName evidence="1">Multidrug transporter MdtC</fullName>
    </alternativeName>
</protein>